<keyword id="KW-0378">Hydrolase</keyword>
<keyword id="KW-1185">Reference proteome</keyword>
<gene>
    <name evidence="1" type="primary">apaH</name>
    <name type="ordered locus">SO_3641</name>
</gene>
<comment type="function">
    <text evidence="1">Hydrolyzes diadenosine 5',5'''-P1,P4-tetraphosphate to yield ADP.</text>
</comment>
<comment type="catalytic activity">
    <reaction evidence="1">
        <text>P(1),P(4)-bis(5'-adenosyl) tetraphosphate + H2O = 2 ADP + 2 H(+)</text>
        <dbReference type="Rhea" id="RHEA:24252"/>
        <dbReference type="ChEBI" id="CHEBI:15377"/>
        <dbReference type="ChEBI" id="CHEBI:15378"/>
        <dbReference type="ChEBI" id="CHEBI:58141"/>
        <dbReference type="ChEBI" id="CHEBI:456216"/>
        <dbReference type="EC" id="3.6.1.41"/>
    </reaction>
</comment>
<comment type="similarity">
    <text evidence="1">Belongs to the Ap4A hydrolase family.</text>
</comment>
<sequence>MAHYFVGDVQGCFAELQRLLAKVDFNPSRDELWAVGDLVARGPDSLATLRFFQSLGDAGKIVLGNHDLHLLALHGKLKRDKPSDNLTPLLNAPDISSLIDWLRQQPLMRELPEHKVIMTHAGVPPQWSLEVLRQESLLVSQALKQNDYLDALISQMYTDTAERWDPSAIGINRLRFCINALTRMRYLYVDGHLDFDCKQPPEDCSNPQLRPWFEFTSTLRNSHILVFGHWAALMGKVDAPNLKALDTGCCWGEHLTLWHLEKDQKITQKKLKKS</sequence>
<evidence type="ECO:0000255" key="1">
    <source>
        <dbReference type="HAMAP-Rule" id="MF_00199"/>
    </source>
</evidence>
<proteinExistence type="inferred from homology"/>
<name>APAH_SHEON</name>
<accession>Q8EB91</accession>
<feature type="chain" id="PRO_0000198010" description="Bis(5'-nucleosyl)-tetraphosphatase, symmetrical">
    <location>
        <begin position="1"/>
        <end position="274"/>
    </location>
</feature>
<protein>
    <recommendedName>
        <fullName evidence="1">Bis(5'-nucleosyl)-tetraphosphatase, symmetrical</fullName>
        <ecNumber evidence="1">3.6.1.41</ecNumber>
    </recommendedName>
    <alternativeName>
        <fullName evidence="1">Ap4A hydrolase</fullName>
    </alternativeName>
    <alternativeName>
        <fullName evidence="1">Diadenosine 5',5'''-P1,P4-tetraphosphate pyrophosphohydrolase</fullName>
    </alternativeName>
    <alternativeName>
        <fullName evidence="1">Diadenosine tetraphosphatase</fullName>
    </alternativeName>
</protein>
<organism>
    <name type="scientific">Shewanella oneidensis (strain ATCC 700550 / JCM 31522 / CIP 106686 / LMG 19005 / NCIMB 14063 / MR-1)</name>
    <dbReference type="NCBI Taxonomy" id="211586"/>
    <lineage>
        <taxon>Bacteria</taxon>
        <taxon>Pseudomonadati</taxon>
        <taxon>Pseudomonadota</taxon>
        <taxon>Gammaproteobacteria</taxon>
        <taxon>Alteromonadales</taxon>
        <taxon>Shewanellaceae</taxon>
        <taxon>Shewanella</taxon>
    </lineage>
</organism>
<dbReference type="EC" id="3.6.1.41" evidence="1"/>
<dbReference type="EMBL" id="AE014299">
    <property type="protein sequence ID" value="AAN56627.1"/>
    <property type="molecule type" value="Genomic_DNA"/>
</dbReference>
<dbReference type="RefSeq" id="NP_719183.1">
    <property type="nucleotide sequence ID" value="NC_004347.2"/>
</dbReference>
<dbReference type="RefSeq" id="WP_011073444.1">
    <property type="nucleotide sequence ID" value="NC_004347.2"/>
</dbReference>
<dbReference type="SMR" id="Q8EB91"/>
<dbReference type="STRING" id="211586.SO_3641"/>
<dbReference type="PaxDb" id="211586-SO_3641"/>
<dbReference type="KEGG" id="son:SO_3641"/>
<dbReference type="PATRIC" id="fig|211586.12.peg.3530"/>
<dbReference type="eggNOG" id="COG0639">
    <property type="taxonomic scope" value="Bacteria"/>
</dbReference>
<dbReference type="HOGENOM" id="CLU_056184_2_0_6"/>
<dbReference type="OrthoDB" id="9807890at2"/>
<dbReference type="PhylomeDB" id="Q8EB91"/>
<dbReference type="BioCyc" id="SONE211586:G1GMP-3392-MONOMER"/>
<dbReference type="Proteomes" id="UP000008186">
    <property type="component" value="Chromosome"/>
</dbReference>
<dbReference type="GO" id="GO:0005737">
    <property type="term" value="C:cytoplasm"/>
    <property type="evidence" value="ECO:0000318"/>
    <property type="project" value="GO_Central"/>
</dbReference>
<dbReference type="GO" id="GO:0008803">
    <property type="term" value="F:bis(5'-nucleosyl)-tetraphosphatase (symmetrical) activity"/>
    <property type="evidence" value="ECO:0000318"/>
    <property type="project" value="GO_Central"/>
</dbReference>
<dbReference type="GO" id="GO:0016791">
    <property type="term" value="F:phosphatase activity"/>
    <property type="evidence" value="ECO:0000318"/>
    <property type="project" value="GO_Central"/>
</dbReference>
<dbReference type="GO" id="GO:0110154">
    <property type="term" value="P:RNA decapping"/>
    <property type="evidence" value="ECO:0000318"/>
    <property type="project" value="GO_Central"/>
</dbReference>
<dbReference type="CDD" id="cd07422">
    <property type="entry name" value="MPP_ApaH"/>
    <property type="match status" value="1"/>
</dbReference>
<dbReference type="Gene3D" id="3.60.21.10">
    <property type="match status" value="1"/>
</dbReference>
<dbReference type="HAMAP" id="MF_00199">
    <property type="entry name" value="ApaH"/>
    <property type="match status" value="1"/>
</dbReference>
<dbReference type="InterPro" id="IPR050126">
    <property type="entry name" value="Ap4A_hydrolase"/>
</dbReference>
<dbReference type="InterPro" id="IPR004617">
    <property type="entry name" value="ApaH"/>
</dbReference>
<dbReference type="InterPro" id="IPR004843">
    <property type="entry name" value="Calcineurin-like_PHP_ApaH"/>
</dbReference>
<dbReference type="InterPro" id="IPR029052">
    <property type="entry name" value="Metallo-depent_PP-like"/>
</dbReference>
<dbReference type="NCBIfam" id="TIGR00668">
    <property type="entry name" value="apaH"/>
    <property type="match status" value="1"/>
</dbReference>
<dbReference type="NCBIfam" id="NF001204">
    <property type="entry name" value="PRK00166.1"/>
    <property type="match status" value="1"/>
</dbReference>
<dbReference type="PANTHER" id="PTHR42850:SF11">
    <property type="entry name" value="BIS(5'-NUCLEOSYL)-TETRAPHOSPHATASE [SYMMETRICAL]"/>
    <property type="match status" value="1"/>
</dbReference>
<dbReference type="PANTHER" id="PTHR42850">
    <property type="entry name" value="METALLOPHOSPHOESTERASE"/>
    <property type="match status" value="1"/>
</dbReference>
<dbReference type="Pfam" id="PF00149">
    <property type="entry name" value="Metallophos"/>
    <property type="match status" value="1"/>
</dbReference>
<dbReference type="PIRSF" id="PIRSF000903">
    <property type="entry name" value="B5n-ttraPtase_sm"/>
    <property type="match status" value="1"/>
</dbReference>
<dbReference type="SUPFAM" id="SSF56300">
    <property type="entry name" value="Metallo-dependent phosphatases"/>
    <property type="match status" value="1"/>
</dbReference>
<reference key="1">
    <citation type="journal article" date="2002" name="Nat. Biotechnol.">
        <title>Genome sequence of the dissimilatory metal ion-reducing bacterium Shewanella oneidensis.</title>
        <authorList>
            <person name="Heidelberg J.F."/>
            <person name="Paulsen I.T."/>
            <person name="Nelson K.E."/>
            <person name="Gaidos E.J."/>
            <person name="Nelson W.C."/>
            <person name="Read T.D."/>
            <person name="Eisen J.A."/>
            <person name="Seshadri R."/>
            <person name="Ward N.L."/>
            <person name="Methe B.A."/>
            <person name="Clayton R.A."/>
            <person name="Meyer T."/>
            <person name="Tsapin A."/>
            <person name="Scott J."/>
            <person name="Beanan M.J."/>
            <person name="Brinkac L.M."/>
            <person name="Daugherty S.C."/>
            <person name="DeBoy R.T."/>
            <person name="Dodson R.J."/>
            <person name="Durkin A.S."/>
            <person name="Haft D.H."/>
            <person name="Kolonay J.F."/>
            <person name="Madupu R."/>
            <person name="Peterson J.D."/>
            <person name="Umayam L.A."/>
            <person name="White O."/>
            <person name="Wolf A.M."/>
            <person name="Vamathevan J.J."/>
            <person name="Weidman J.F."/>
            <person name="Impraim M."/>
            <person name="Lee K."/>
            <person name="Berry K.J."/>
            <person name="Lee C."/>
            <person name="Mueller J."/>
            <person name="Khouri H.M."/>
            <person name="Gill J."/>
            <person name="Utterback T.R."/>
            <person name="McDonald L.A."/>
            <person name="Feldblyum T.V."/>
            <person name="Smith H.O."/>
            <person name="Venter J.C."/>
            <person name="Nealson K.H."/>
            <person name="Fraser C.M."/>
        </authorList>
    </citation>
    <scope>NUCLEOTIDE SEQUENCE [LARGE SCALE GENOMIC DNA]</scope>
    <source>
        <strain>ATCC 700550 / JCM 31522 / CIP 106686 / LMG 19005 / NCIMB 14063 / MR-1</strain>
    </source>
</reference>